<feature type="chain" id="PRO_0000100697" description="Pituitary-specific positive transcription factor 1">
    <location>
        <begin position="1"/>
        <end position="291"/>
    </location>
</feature>
<feature type="domain" description="POU-specific" evidence="2">
    <location>
        <begin position="124"/>
        <end position="198"/>
    </location>
</feature>
<feature type="DNA-binding region" description="Homeobox" evidence="1">
    <location>
        <begin position="214"/>
        <end position="273"/>
    </location>
</feature>
<feature type="short sequence motif" description="9aaTAD" evidence="11">
    <location>
        <begin position="5"/>
        <end position="13"/>
    </location>
</feature>
<feature type="splice variant" id="VSP_002314" description="In isoform A." evidence="17">
    <original>T</original>
    <variation>TVPSILSLIQTPKCLCTHFSVTTLGNT</variation>
    <location>
        <position position="47"/>
    </location>
</feature>
<feature type="sequence variant" id="VAR_003776" description="In dbSNP:rs1051612." evidence="13">
    <original>Q</original>
    <variation>R</variation>
    <location>
        <position position="4"/>
    </location>
</feature>
<feature type="sequence variant" id="VAR_049361" description="In dbSNP:rs35182189.">
    <original>A</original>
    <variation>V</variation>
    <location>
        <position position="19"/>
    </location>
</feature>
<feature type="sequence variant" id="VAR_003777" description="In CPHD1; dbSNP:rs104893757." evidence="4">
    <original>P</original>
    <variation>L</variation>
    <location>
        <position position="24"/>
    </location>
</feature>
<feature type="sequence variant" id="VAR_075530" description="In CPHD1; reduces transactivation capacity on the GH1 gene; increases the functional binding on the GH1 promoter; increases the interaction with ELK1, LHX3 and PITX1." evidence="10">
    <original>P</original>
    <variation>L</variation>
    <location>
        <position position="76"/>
    </location>
</feature>
<feature type="sequence variant" id="VAR_010574" description="In CPHD1; dbSNP:rs104893761." evidence="14">
    <original>F</original>
    <variation>C</variation>
    <location>
        <position position="135"/>
    </location>
</feature>
<feature type="sequence variant" id="VAR_003778" description="In CPHD1; dbSNP:rs104893759." evidence="4">
    <original>R</original>
    <variation>Q</variation>
    <location>
        <position position="143"/>
    </location>
</feature>
<feature type="sequence variant" id="VAR_003779" description="In CPHD1; dbSNP:rs104893756." evidence="6">
    <original>A</original>
    <variation>P</variation>
    <location>
        <position position="158"/>
    </location>
</feature>
<feature type="sequence variant" id="VAR_063425" description="In CPHD1; results in severe impairment of transactivation; has a greatly reduced DNA-binding affinity compared to the wild-type protein; dbSNP:rs104893765." evidence="7">
    <original>R</original>
    <variation>Q</variation>
    <location>
        <position position="172"/>
    </location>
</feature>
<feature type="sequence variant" id="VAR_010575" description="In CPHD1; dbSNP:rs1207179169." evidence="15">
    <original>E</original>
    <variation>G</variation>
    <location>
        <position position="174"/>
    </location>
</feature>
<feature type="sequence variant" id="VAR_063426" description="In CPHD1; transactivation capacity of this mutant is markedly decreased on the GH1; PRL, TSHB and POU1F1 genes; abolishes the functional interaction of POU1F1 on the PRL promoter with the coactivator CREBBP but not with the transcription factor LHX3; displays normal nuclear accumulation but a markedly decreased binding to a DNA response element; dbSNP:rs104893766." evidence="8">
    <original>S</original>
    <variation>R</variation>
    <location>
        <position position="179"/>
    </location>
</feature>
<feature type="sequence variant" id="VAR_015260" description="In CPHD1; dbSNP:rs104893758." evidence="3">
    <original>W</original>
    <variation>R</variation>
    <location>
        <position position="193"/>
    </location>
</feature>
<feature type="sequence variant" id="VAR_003780" description="In dbSNP:rs1131815." evidence="13">
    <original>D</original>
    <variation>Y</variation>
    <location>
        <position position="227"/>
    </location>
</feature>
<feature type="sequence variant" id="VAR_063427" description="In CPHD1; results in mild impairment of transactivation; has a similar DNA-binding affinity as the wild-type protein; dbSNP:rs104893764." evidence="7">
    <original>E</original>
    <variation>K</variation>
    <location>
        <position position="230"/>
    </location>
</feature>
<feature type="sequence variant" id="VAR_010576" description="In CPHD1; loss of function; dbSNP:rs104893762." evidence="16">
    <original>P</original>
    <variation>S</variation>
    <location>
        <position position="239"/>
    </location>
</feature>
<feature type="sequence variant" id="VAR_075531" description="In CPHD1; reduces transactivation capacity on the PRL gene; increases instability of the protein; dbSNP:rs780359925." evidence="9">
    <original>R</original>
    <variation>W</variation>
    <location>
        <position position="265"/>
    </location>
</feature>
<feature type="sequence variant" id="VAR_003781" description="In CPHD1; dbSNP:rs104893755." evidence="4 5 7 12">
    <original>R</original>
    <variation>W</variation>
    <location>
        <position position="271"/>
    </location>
</feature>
<feature type="mutagenesis site" description="No effect on the interaction with ELK1, LHX3 and PITX1." evidence="10">
    <original>L</original>
    <variation>A</variation>
    <location>
        <position position="74"/>
    </location>
</feature>
<feature type="mutagenesis site" description="Increases the interaction with LHX3. No effect on the interaction with ELK1." evidence="10">
    <original>T</original>
    <variation>A</variation>
    <location>
        <position position="75"/>
    </location>
</feature>
<feature type="mutagenesis site" description="Increases the interaction with LHX3 and PITX1. No effect on the interaction with ELK1." evidence="10">
    <original>P</original>
    <variation>A</variation>
    <location>
        <position position="76"/>
    </location>
</feature>
<feature type="mutagenesis site" description="Increases the interaction with LHX3 and PITX1. No effect on the interaction with ELK1." evidence="10">
    <original>C</original>
    <variation>A</variation>
    <location>
        <position position="77"/>
    </location>
</feature>
<feature type="mutagenesis site" description="Increases the interaction with LHX3 and PITX1. No effect on the interaction with ELK1." evidence="10">
    <original>L</original>
    <variation>A</variation>
    <location>
        <position position="78"/>
    </location>
</feature>
<feature type="helix" evidence="18">
    <location>
        <begin position="127"/>
        <end position="145"/>
    </location>
</feature>
<feature type="helix" evidence="18">
    <location>
        <begin position="150"/>
        <end position="155"/>
    </location>
</feature>
<feature type="helix" evidence="18">
    <location>
        <begin position="158"/>
        <end position="161"/>
    </location>
</feature>
<feature type="helix" evidence="18">
    <location>
        <begin position="167"/>
        <end position="174"/>
    </location>
</feature>
<feature type="helix" evidence="18">
    <location>
        <begin position="180"/>
        <end position="196"/>
    </location>
</feature>
<feature type="helix" evidence="18">
    <location>
        <begin position="223"/>
        <end position="235"/>
    </location>
</feature>
<feature type="helix" evidence="18">
    <location>
        <begin position="241"/>
        <end position="251"/>
    </location>
</feature>
<feature type="helix" evidence="18">
    <location>
        <begin position="255"/>
        <end position="268"/>
    </location>
</feature>
<name>PIT1_HUMAN</name>
<dbReference type="EMBL" id="L18781">
    <property type="protein sequence ID" value="AAA60093.1"/>
    <property type="molecule type" value="mRNA"/>
</dbReference>
<dbReference type="EMBL" id="X62429">
    <property type="protein sequence ID" value="CAA44295.1"/>
    <property type="molecule type" value="mRNA"/>
</dbReference>
<dbReference type="EMBL" id="D10216">
    <property type="protein sequence ID" value="BAA01068.1"/>
    <property type="molecule type" value="mRNA"/>
</dbReference>
<dbReference type="EMBL" id="X72215">
    <property type="protein sequence ID" value="CAA51017.1"/>
    <property type="molecule type" value="mRNA"/>
</dbReference>
<dbReference type="EMBL" id="D12892">
    <property type="protein sequence ID" value="BAA02291.1"/>
    <property type="molecule type" value="Genomic_DNA"/>
</dbReference>
<dbReference type="EMBL" id="X77223">
    <property type="protein sequence ID" value="CAA54440.2"/>
    <property type="status" value="ALT_SEQ"/>
    <property type="molecule type" value="Genomic_DNA"/>
</dbReference>
<dbReference type="EMBL" id="X77224">
    <property type="protein sequence ID" value="CAA54440.2"/>
    <property type="status" value="JOINED"/>
    <property type="molecule type" value="Genomic_DNA"/>
</dbReference>
<dbReference type="EMBL" id="X77223">
    <property type="protein sequence ID" value="CAA54441.1"/>
    <property type="molecule type" value="Genomic_DNA"/>
</dbReference>
<dbReference type="EMBL" id="X77224">
    <property type="protein sequence ID" value="CAA54441.1"/>
    <property type="status" value="JOINED"/>
    <property type="molecule type" value="Genomic_DNA"/>
</dbReference>
<dbReference type="EMBL" id="D11333">
    <property type="protein sequence ID" value="BAA34536.1"/>
    <property type="molecule type" value="Genomic_DNA"/>
</dbReference>
<dbReference type="CCDS" id="CCDS2919.1">
    <molecule id="P28069-1"/>
</dbReference>
<dbReference type="CCDS" id="CCDS46873.1">
    <molecule id="P28069-2"/>
</dbReference>
<dbReference type="PIR" id="S18718">
    <property type="entry name" value="S18718"/>
</dbReference>
<dbReference type="RefSeq" id="NP_000297.1">
    <molecule id="P28069-1"/>
    <property type="nucleotide sequence ID" value="NM_000306.4"/>
</dbReference>
<dbReference type="RefSeq" id="NP_001116229.1">
    <molecule id="P28069-2"/>
    <property type="nucleotide sequence ID" value="NM_001122757.3"/>
</dbReference>
<dbReference type="PDB" id="5WC9">
    <property type="method" value="X-ray"/>
    <property type="resolution" value="3.15 A"/>
    <property type="chains" value="A/B/E/F=124-273"/>
</dbReference>
<dbReference type="PDBsum" id="5WC9"/>
<dbReference type="SMR" id="P28069"/>
<dbReference type="BioGRID" id="111445">
    <property type="interactions" value="31"/>
</dbReference>
<dbReference type="FunCoup" id="P28069">
    <property type="interactions" value="348"/>
</dbReference>
<dbReference type="IntAct" id="P28069">
    <property type="interactions" value="15"/>
</dbReference>
<dbReference type="MINT" id="P28069"/>
<dbReference type="STRING" id="9606.ENSP00000342931"/>
<dbReference type="GlyGen" id="P28069">
    <property type="glycosylation" value="2 sites"/>
</dbReference>
<dbReference type="iPTMnet" id="P28069"/>
<dbReference type="PhosphoSitePlus" id="P28069"/>
<dbReference type="BioMuta" id="POU1F1"/>
<dbReference type="DMDM" id="123408"/>
<dbReference type="jPOST" id="P28069"/>
<dbReference type="MassIVE" id="P28069"/>
<dbReference type="PaxDb" id="9606-ENSP00000342931"/>
<dbReference type="PeptideAtlas" id="P28069"/>
<dbReference type="ProteomicsDB" id="54444">
    <molecule id="P28069-1"/>
</dbReference>
<dbReference type="ProteomicsDB" id="54445">
    <molecule id="P28069-2"/>
</dbReference>
<dbReference type="Antibodypedia" id="15685">
    <property type="antibodies" value="93 antibodies from 21 providers"/>
</dbReference>
<dbReference type="DNASU" id="5449"/>
<dbReference type="Ensembl" id="ENST00000344265.8">
    <molecule id="P28069-2"/>
    <property type="protein sequence ID" value="ENSP00000342931.3"/>
    <property type="gene ID" value="ENSG00000064835.12"/>
</dbReference>
<dbReference type="Ensembl" id="ENST00000350375.7">
    <molecule id="P28069-1"/>
    <property type="protein sequence ID" value="ENSP00000263781.2"/>
    <property type="gene ID" value="ENSG00000064835.12"/>
</dbReference>
<dbReference type="GeneID" id="5449"/>
<dbReference type="KEGG" id="hsa:5449"/>
<dbReference type="MANE-Select" id="ENST00000350375.7">
    <property type="protein sequence ID" value="ENSP00000263781.2"/>
    <property type="RefSeq nucleotide sequence ID" value="NM_000306.4"/>
    <property type="RefSeq protein sequence ID" value="NP_000297.1"/>
</dbReference>
<dbReference type="UCSC" id="uc003dqq.2">
    <molecule id="P28069-1"/>
    <property type="organism name" value="human"/>
</dbReference>
<dbReference type="AGR" id="HGNC:9210"/>
<dbReference type="CTD" id="5449"/>
<dbReference type="DisGeNET" id="5449"/>
<dbReference type="GeneCards" id="POU1F1"/>
<dbReference type="HGNC" id="HGNC:9210">
    <property type="gene designation" value="POU1F1"/>
</dbReference>
<dbReference type="HPA" id="ENSG00000064835">
    <property type="expression patterns" value="Tissue enriched (pituitary)"/>
</dbReference>
<dbReference type="MalaCards" id="POU1F1"/>
<dbReference type="MIM" id="173110">
    <property type="type" value="gene"/>
</dbReference>
<dbReference type="MIM" id="613038">
    <property type="type" value="phenotype"/>
</dbReference>
<dbReference type="neXtProt" id="NX_P28069"/>
<dbReference type="OpenTargets" id="ENSG00000064835"/>
<dbReference type="Orphanet" id="95494">
    <property type="disease" value="Combined pituitary hormone deficiencies, genetic forms"/>
</dbReference>
<dbReference type="Orphanet" id="226307">
    <property type="disease" value="Hypothyroidism due to deficient transcription factors involved in pituitary development or function"/>
</dbReference>
<dbReference type="Orphanet" id="231679">
    <property type="disease" value="Isolated growth hormone deficiency type II"/>
</dbReference>
<dbReference type="PharmGKB" id="PA33534"/>
<dbReference type="VEuPathDB" id="HostDB:ENSG00000064835"/>
<dbReference type="eggNOG" id="KOG3802">
    <property type="taxonomic scope" value="Eukaryota"/>
</dbReference>
<dbReference type="GeneTree" id="ENSGT00940000158913"/>
<dbReference type="HOGENOM" id="CLU_882684_0_0_1"/>
<dbReference type="InParanoid" id="P28069"/>
<dbReference type="OMA" id="TSHAHGM"/>
<dbReference type="OrthoDB" id="6358449at2759"/>
<dbReference type="PAN-GO" id="P28069">
    <property type="GO annotations" value="3 GO annotations based on evolutionary models"/>
</dbReference>
<dbReference type="PhylomeDB" id="P28069"/>
<dbReference type="TreeFam" id="TF316413"/>
<dbReference type="PathwayCommons" id="P28069"/>
<dbReference type="SignaLink" id="P28069"/>
<dbReference type="SIGNOR" id="P28069"/>
<dbReference type="BioGRID-ORCS" id="5449">
    <property type="hits" value="15 hits in 1169 CRISPR screens"/>
</dbReference>
<dbReference type="GeneWiki" id="Pituitary-specific_positive_transcription_factor_1"/>
<dbReference type="GenomeRNAi" id="5449"/>
<dbReference type="Pharos" id="P28069">
    <property type="development level" value="Tbio"/>
</dbReference>
<dbReference type="PRO" id="PR:P28069"/>
<dbReference type="Proteomes" id="UP000005640">
    <property type="component" value="Chromosome 3"/>
</dbReference>
<dbReference type="RNAct" id="P28069">
    <property type="molecule type" value="protein"/>
</dbReference>
<dbReference type="Bgee" id="ENSG00000064835">
    <property type="expression patterns" value="Expressed in pituitary gland and 48 other cell types or tissues"/>
</dbReference>
<dbReference type="ExpressionAtlas" id="P28069">
    <property type="expression patterns" value="baseline and differential"/>
</dbReference>
<dbReference type="GO" id="GO:0000785">
    <property type="term" value="C:chromatin"/>
    <property type="evidence" value="ECO:0000247"/>
    <property type="project" value="NTNU_SB"/>
</dbReference>
<dbReference type="GO" id="GO:0005829">
    <property type="term" value="C:cytosol"/>
    <property type="evidence" value="ECO:0000314"/>
    <property type="project" value="HPA"/>
</dbReference>
<dbReference type="GO" id="GO:0005654">
    <property type="term" value="C:nucleoplasm"/>
    <property type="evidence" value="ECO:0000314"/>
    <property type="project" value="HPA"/>
</dbReference>
<dbReference type="GO" id="GO:0005634">
    <property type="term" value="C:nucleus"/>
    <property type="evidence" value="ECO:0000314"/>
    <property type="project" value="UniProtKB"/>
</dbReference>
<dbReference type="GO" id="GO:0001228">
    <property type="term" value="F:DNA-binding transcription activator activity, RNA polymerase II-specific"/>
    <property type="evidence" value="ECO:0007669"/>
    <property type="project" value="Ensembl"/>
</dbReference>
<dbReference type="GO" id="GO:0003700">
    <property type="term" value="F:DNA-binding transcription factor activity"/>
    <property type="evidence" value="ECO:0000314"/>
    <property type="project" value="UniProtKB"/>
</dbReference>
<dbReference type="GO" id="GO:0000981">
    <property type="term" value="F:DNA-binding transcription factor activity, RNA polymerase II-specific"/>
    <property type="evidence" value="ECO:0000314"/>
    <property type="project" value="UniProtKB"/>
</dbReference>
<dbReference type="GO" id="GO:0106222">
    <property type="term" value="F:lncRNA binding"/>
    <property type="evidence" value="ECO:0007669"/>
    <property type="project" value="Ensembl"/>
</dbReference>
<dbReference type="GO" id="GO:0000978">
    <property type="term" value="F:RNA polymerase II cis-regulatory region sequence-specific DNA binding"/>
    <property type="evidence" value="ECO:0000318"/>
    <property type="project" value="GO_Central"/>
</dbReference>
<dbReference type="GO" id="GO:0061629">
    <property type="term" value="F:RNA polymerase II-specific DNA-binding transcription factor binding"/>
    <property type="evidence" value="ECO:0000353"/>
    <property type="project" value="UniProtKB"/>
</dbReference>
<dbReference type="GO" id="GO:1990837">
    <property type="term" value="F:sequence-specific double-stranded DNA binding"/>
    <property type="evidence" value="ECO:0000314"/>
    <property type="project" value="ARUK-UCL"/>
</dbReference>
<dbReference type="GO" id="GO:0021984">
    <property type="term" value="P:adenohypophysis development"/>
    <property type="evidence" value="ECO:0007669"/>
    <property type="project" value="Ensembl"/>
</dbReference>
<dbReference type="GO" id="GO:0008285">
    <property type="term" value="P:negative regulation of cell population proliferation"/>
    <property type="evidence" value="ECO:0000304"/>
    <property type="project" value="ProtInc"/>
</dbReference>
<dbReference type="GO" id="GO:0000122">
    <property type="term" value="P:negative regulation of transcription by RNA polymerase II"/>
    <property type="evidence" value="ECO:0007669"/>
    <property type="project" value="Ensembl"/>
</dbReference>
<dbReference type="GO" id="GO:0045944">
    <property type="term" value="P:positive regulation of transcription by RNA polymerase II"/>
    <property type="evidence" value="ECO:0000314"/>
    <property type="project" value="UniProtKB"/>
</dbReference>
<dbReference type="GO" id="GO:0006355">
    <property type="term" value="P:regulation of DNA-templated transcription"/>
    <property type="evidence" value="ECO:0000314"/>
    <property type="project" value="UniProtKB"/>
</dbReference>
<dbReference type="GO" id="GO:0006357">
    <property type="term" value="P:regulation of transcription by RNA polymerase II"/>
    <property type="evidence" value="ECO:0000318"/>
    <property type="project" value="GO_Central"/>
</dbReference>
<dbReference type="CDD" id="cd00086">
    <property type="entry name" value="homeodomain"/>
    <property type="match status" value="1"/>
</dbReference>
<dbReference type="FunFam" id="1.10.10.60:FF:000150">
    <property type="entry name" value="POU domain protein"/>
    <property type="match status" value="1"/>
</dbReference>
<dbReference type="FunFam" id="1.10.260.40:FF:000007">
    <property type="entry name" value="POU domain protein"/>
    <property type="match status" value="1"/>
</dbReference>
<dbReference type="Gene3D" id="1.10.10.60">
    <property type="entry name" value="Homeodomain-like"/>
    <property type="match status" value="1"/>
</dbReference>
<dbReference type="Gene3D" id="1.10.260.40">
    <property type="entry name" value="lambda repressor-like DNA-binding domains"/>
    <property type="match status" value="1"/>
</dbReference>
<dbReference type="InterPro" id="IPR001356">
    <property type="entry name" value="HD"/>
</dbReference>
<dbReference type="InterPro" id="IPR017970">
    <property type="entry name" value="Homeobox_CS"/>
</dbReference>
<dbReference type="InterPro" id="IPR009057">
    <property type="entry name" value="Homeodomain-like_sf"/>
</dbReference>
<dbReference type="InterPro" id="IPR010982">
    <property type="entry name" value="Lambda_DNA-bd_dom_sf"/>
</dbReference>
<dbReference type="InterPro" id="IPR013847">
    <property type="entry name" value="POU"/>
</dbReference>
<dbReference type="InterPro" id="IPR000327">
    <property type="entry name" value="POU_dom"/>
</dbReference>
<dbReference type="InterPro" id="IPR050255">
    <property type="entry name" value="POU_domain_TF"/>
</dbReference>
<dbReference type="PANTHER" id="PTHR11636:SF84">
    <property type="entry name" value="NETRIN-1-RELATED"/>
    <property type="match status" value="1"/>
</dbReference>
<dbReference type="PANTHER" id="PTHR11636">
    <property type="entry name" value="POU DOMAIN"/>
    <property type="match status" value="1"/>
</dbReference>
<dbReference type="Pfam" id="PF00046">
    <property type="entry name" value="Homeodomain"/>
    <property type="match status" value="1"/>
</dbReference>
<dbReference type="Pfam" id="PF00157">
    <property type="entry name" value="Pou"/>
    <property type="match status" value="1"/>
</dbReference>
<dbReference type="PRINTS" id="PR00028">
    <property type="entry name" value="POUDOMAIN"/>
</dbReference>
<dbReference type="SMART" id="SM00389">
    <property type="entry name" value="HOX"/>
    <property type="match status" value="1"/>
</dbReference>
<dbReference type="SMART" id="SM00352">
    <property type="entry name" value="POU"/>
    <property type="match status" value="1"/>
</dbReference>
<dbReference type="SUPFAM" id="SSF46689">
    <property type="entry name" value="Homeodomain-like"/>
    <property type="match status" value="1"/>
</dbReference>
<dbReference type="SUPFAM" id="SSF47413">
    <property type="entry name" value="lambda repressor-like DNA-binding domains"/>
    <property type="match status" value="1"/>
</dbReference>
<dbReference type="PROSITE" id="PS00027">
    <property type="entry name" value="HOMEOBOX_1"/>
    <property type="match status" value="1"/>
</dbReference>
<dbReference type="PROSITE" id="PS50071">
    <property type="entry name" value="HOMEOBOX_2"/>
    <property type="match status" value="1"/>
</dbReference>
<dbReference type="PROSITE" id="PS00035">
    <property type="entry name" value="POU_1"/>
    <property type="match status" value="1"/>
</dbReference>
<dbReference type="PROSITE" id="PS00465">
    <property type="entry name" value="POU_2"/>
    <property type="match status" value="1"/>
</dbReference>
<dbReference type="PROSITE" id="PS51179">
    <property type="entry name" value="POU_3"/>
    <property type="match status" value="1"/>
</dbReference>
<protein>
    <recommendedName>
        <fullName>Pituitary-specific positive transcription factor 1</fullName>
        <shortName>PIT-1</shortName>
    </recommendedName>
    <alternativeName>
        <fullName>Growth hormone factor 1</fullName>
        <shortName>GHF-1</shortName>
    </alternativeName>
</protein>
<keyword id="KW-0002">3D-structure</keyword>
<keyword id="KW-0010">Activator</keyword>
<keyword id="KW-0025">Alternative splicing</keyword>
<keyword id="KW-0225">Disease variant</keyword>
<keyword id="KW-0238">DNA-binding</keyword>
<keyword id="KW-0242">Dwarfism</keyword>
<keyword id="KW-0371">Homeobox</keyword>
<keyword id="KW-0539">Nucleus</keyword>
<keyword id="KW-1267">Proteomics identification</keyword>
<keyword id="KW-1185">Reference proteome</keyword>
<keyword id="KW-0804">Transcription</keyword>
<keyword id="KW-0805">Transcription regulation</keyword>
<gene>
    <name type="primary">POU1F1</name>
    <name type="synonym">GHF1</name>
    <name type="synonym">PIT1</name>
</gene>
<organism>
    <name type="scientific">Homo sapiens</name>
    <name type="common">Human</name>
    <dbReference type="NCBI Taxonomy" id="9606"/>
    <lineage>
        <taxon>Eukaryota</taxon>
        <taxon>Metazoa</taxon>
        <taxon>Chordata</taxon>
        <taxon>Craniata</taxon>
        <taxon>Vertebrata</taxon>
        <taxon>Euteleostomi</taxon>
        <taxon>Mammalia</taxon>
        <taxon>Eutheria</taxon>
        <taxon>Euarchontoglires</taxon>
        <taxon>Primates</taxon>
        <taxon>Haplorrhini</taxon>
        <taxon>Catarrhini</taxon>
        <taxon>Hominidae</taxon>
        <taxon>Homo</taxon>
    </lineage>
</organism>
<proteinExistence type="evidence at protein level"/>
<reference key="1">
    <citation type="journal article" date="1991" name="Nucleic Acids Res.">
        <title>Cloning of the human cDNA for transcription factor Pit-1.</title>
        <authorList>
            <person name="Lew A.M."/>
            <person name="Elsholtz H.P."/>
        </authorList>
    </citation>
    <scope>NUCLEOTIDE SEQUENCE [MRNA] (ISOFORM B)</scope>
    <source>
        <tissue>Pituitary anterior lobe</tissue>
    </source>
</reference>
<reference key="2">
    <citation type="journal article" date="1992" name="Biochim. Biophys. Acta">
        <title>Nucleotide sequence of the complementary DNA for human Pit-1/GHF-1.</title>
        <authorList>
            <person name="Tatsumi K.I."/>
            <person name="Notomi T."/>
            <person name="Amino N."/>
            <person name="Miyai K."/>
        </authorList>
    </citation>
    <scope>NUCLEOTIDE SEQUENCE [GENOMIC DNA / MRNA] (ISOFORM B)</scope>
</reference>
<reference key="3">
    <citation type="submission" date="1992-08" db="EMBL/GenBank/DDBJ databases">
        <title>The structure and the chromosomal location of the human PIT1 gene.</title>
        <authorList>
            <person name="Tatsumi K."/>
            <person name="Notomi T."/>
            <person name="Irie Y."/>
            <person name="Endo Y."/>
            <person name="Onogi S."/>
            <person name="Amino N."/>
            <person name="Miyai K."/>
        </authorList>
    </citation>
    <scope>NUCLEOTIDE SEQUENCE [GENOMIC DNA] (ISOFORM A)</scope>
</reference>
<reference key="4">
    <citation type="journal article" date="1995" name="Gene">
        <title>A novel pituitary transcription factor is produced by alternative splicing of the human GHF-1/PIT-1 gene.</title>
        <authorList>
            <person name="Delhase M."/>
            <person name="Vila V."/>
            <person name="Hooghe-Peters E.L."/>
            <person name="Castrillo J.-L."/>
        </authorList>
    </citation>
    <scope>NUCLEOTIDE SEQUENCE [GENOMIC DNA] OF 1-71</scope>
    <scope>ALTERNATIVE SPLICING (ISOFORM A)</scope>
    <source>
        <tissue>Placenta</tissue>
    </source>
</reference>
<reference key="5">
    <citation type="submission" date="2010-12" db="EMBL/GenBank/DDBJ databases">
        <authorList>
            <person name="Delhase M."/>
        </authorList>
    </citation>
    <scope>SEQUENCE REVISION</scope>
</reference>
<reference key="6">
    <citation type="journal article" date="1992" name="Gene">
        <title>Characterization of the gene encoding human pituitary-specific transcription factor, Pit-1.</title>
        <authorList>
            <person name="Ohta K."/>
            <person name="Nobukuni Y."/>
            <person name="Mitsubuchi H."/>
            <person name="Ohta T."/>
            <person name="Tohma T."/>
            <person name="Jinno Y."/>
            <person name="Endo F."/>
            <person name="Matsuda I."/>
        </authorList>
    </citation>
    <scope>NUCLEOTIDE SEQUENCE [GENOMIC DNA] OF 1-47</scope>
</reference>
<reference key="7">
    <citation type="journal article" date="1995" name="J. Clin. Endocrinol. Metab.">
        <title>A 'hot spot' in the Pit-1 gene responsible for combined pituitary hormone deficiency: clinical and molecular correlates.</title>
        <authorList>
            <person name="Cohen L.E."/>
            <person name="Wondisford F.E."/>
            <person name="Salvatoni A."/>
            <person name="Maghnie M."/>
            <person name="Brucker-Davis F."/>
            <person name="Weintraub B.D."/>
            <person name="Radovick S."/>
        </authorList>
    </citation>
    <scope>NUCLEOTIDE SEQUENCE [GENOMIC DNA] OF 214-273</scope>
    <scope>VARIANT CPHD1 TRP-271</scope>
    <scope>INVOLVEMENT IN CPHD1</scope>
</reference>
<reference key="8">
    <citation type="journal article" date="2021" name="Stem. Cell. Rev. Rep.">
        <title>The 9aaTAD Activation Domains in the Yamanaka Transcription Factors Oct4, Sox2, Myc, and Klf4.</title>
        <authorList>
            <person name="Piskacek M."/>
            <person name="Otasevic T."/>
            <person name="Repko M."/>
            <person name="Knight A."/>
        </authorList>
    </citation>
    <scope>9AATAD MOTIF</scope>
</reference>
<reference key="9">
    <citation type="journal article" date="1992" name="Biochem. Biophys. Res. Commun.">
        <title>Mutations in the Pit-1 gene in children with combined pituitary hormone deficiency.</title>
        <authorList>
            <person name="Ohta K."/>
            <person name="Nobukuni Y."/>
            <person name="Mitsubuchi H."/>
            <person name="Fujimoto S."/>
            <person name="Matsuo N."/>
            <person name="Inagaki H."/>
            <person name="Endo F."/>
            <person name="Matsuda I."/>
        </authorList>
    </citation>
    <scope>VARIANTS CPHD1 LEU-24; GLN-143 AND TRP-271</scope>
</reference>
<reference key="10">
    <citation type="journal article" date="1992" name="Science">
        <title>A mutation in the POU-homeodomain of Pit-1 responsible for combined pituitary hormone deficiency.</title>
        <authorList>
            <person name="Radovick S."/>
            <person name="Nations M."/>
            <person name="Du Y."/>
            <person name="Berg L.A."/>
            <person name="Weintraub B.D."/>
            <person name="Wondisford F.E."/>
        </authorList>
    </citation>
    <scope>VARIANT CPHD1 TRP-271</scope>
</reference>
<reference key="11">
    <citation type="journal article" date="1992" name="Science">
        <title>Mutation of the POU-specific domain of Pit-1 and hypopituitarism without pituitary hypoplasia.</title>
        <authorList>
            <person name="Pfaeffle R.W."/>
            <person name="DiMattia G.E."/>
            <person name="Parks J.S."/>
            <person name="Brown M.R."/>
            <person name="Wit J.M."/>
            <person name="Jansen M."/>
            <person name="van der Nat H."/>
            <person name="van den Brande J.L."/>
            <person name="Rosenfeld M.G."/>
            <person name="Ingraham H.A."/>
        </authorList>
    </citation>
    <scope>VARIANT CPHD1 PRO-158</scope>
</reference>
<reference key="12">
    <citation type="journal article" date="1993" name="Nucleic Acids Res.">
        <title>Cloning of a human GHF-1/Pit-1 cDNA variant.</title>
        <authorList>
            <person name="Pernasetti F.M."/>
            <person name="Wera S."/>
            <person name="Belayew A."/>
            <person name="Martial J.A."/>
        </authorList>
    </citation>
    <scope>VARIANTS ARG-4 AND TYR-227</scope>
    <source>
        <tissue>Pituitary</tissue>
    </source>
</reference>
<reference key="13">
    <citation type="journal article" date="1996" name="J. Clin. Endocrinol. Metab.">
        <title>A new mutation of the gene encoding the transcription factor Pit-1 is responsible for combined pituitary hormone deficiency.</title>
        <authorList>
            <person name="Pellegrini-Bouiller I."/>
            <person name="Belicar P."/>
            <person name="Barlier A."/>
            <person name="Gunz G."/>
            <person name="Charvet J.P."/>
            <person name="Jaquet P."/>
            <person name="Brue T."/>
            <person name="Vialettes B."/>
            <person name="Enjalbert A."/>
        </authorList>
    </citation>
    <scope>VARIANT CPHD1 CYS-135</scope>
</reference>
<reference key="14">
    <citation type="journal article" date="1998" name="Horm. Res.">
        <title>Central hypothyroidism reveals compound heterozygous mutations in the Pit-1 gene.</title>
        <authorList>
            <person name="Brown M.R."/>
            <person name="Parks J.S."/>
            <person name="Adess M.E."/>
            <person name="Rich B.H."/>
            <person name="Rosenthal I.M."/>
            <person name="Voss T.C."/>
            <person name="VanderHeyden T.C."/>
            <person name="Hurley D.L."/>
        </authorList>
    </citation>
    <scope>VARIANT CPHD1 GLY-174</scope>
</reference>
<reference key="15">
    <citation type="journal article" date="1998" name="J. Clin. Endocrinol. Metab.">
        <title>Pro239Ser: a novel recessive mutation of the Pit-1 gene in seven Middle Eastern children with growth hormone, prolactin, and thyrotropin deficiency.</title>
        <authorList>
            <person name="Pernasetti F.M."/>
            <person name="Milner R.D.G."/>
            <person name="Al-Ashwal A.A.Z."/>
            <person name="de Zegher F."/>
            <person name="Chavez V.M."/>
            <person name="Muller M."/>
            <person name="Martial J.A."/>
        </authorList>
    </citation>
    <scope>VARIANT CPHD1 SER-239</scope>
</reference>
<reference key="16">
    <citation type="journal article" date="2001" name="J. Clin. Endocrinol. Metab.">
        <title>Combined pituitary hormone deficiency caused by compound heterozygosity for two novel mutations in the POU domain of the PIT1/POU1F1 gene.</title>
        <authorList>
            <person name="Hendriks-Stegeman B.I."/>
            <person name="Augustijn K.D."/>
            <person name="Bakker B."/>
            <person name="Holthuizen P."/>
            <person name="van der Vliet P.C."/>
            <person name="Jansen M."/>
        </authorList>
    </citation>
    <scope>VARIANT CPHD1 ARG-193</scope>
</reference>
<reference key="17">
    <citation type="journal article" date="2005" name="J. Clin. Endocrinol. Metab.">
        <title>Novel mutations within the POU1F1 gene associated with variable combined pituitary hormone deficiency.</title>
        <authorList>
            <person name="Turton J.P.G."/>
            <person name="Reynaud R."/>
            <person name="Mehta A."/>
            <person name="Torpiano J."/>
            <person name="Saveanu A."/>
            <person name="Woods K.S."/>
            <person name="Tiulpakov A."/>
            <person name="Zdravkovic V."/>
            <person name="Hamilton J."/>
            <person name="Attard-Montalto S."/>
            <person name="Parascandalo R."/>
            <person name="Vella C."/>
            <person name="Clayton P.E."/>
            <person name="Shalet S."/>
            <person name="Barton J."/>
            <person name="Brue T."/>
            <person name="Dattani M.T."/>
        </authorList>
    </citation>
    <scope>VARIANTS CPHD1 GLN-172; LYS-230 AND TRP-271</scope>
    <scope>CHARACTERIZATION OF VARIANTS CPHD1 GLN-172 AND LYS-230</scope>
</reference>
<reference key="18">
    <citation type="journal article" date="2006" name="J. Clin. Endocrinol. Metab.">
        <title>Identification and functional analysis of the novel S179R POU1F1 mutation associated with combined pituitary hormone deficiency.</title>
        <authorList>
            <person name="Miyata I."/>
            <person name="Vallette-Kasic S."/>
            <person name="Saveanu A."/>
            <person name="Takeuchi M."/>
            <person name="Yoshikawa H."/>
            <person name="Tajima A."/>
            <person name="Tojo K."/>
            <person name="Reynaud R."/>
            <person name="Gueydan M."/>
            <person name="Enjalbert A."/>
            <person name="Tajima N."/>
            <person name="Eto Y."/>
            <person name="Brue T."/>
        </authorList>
    </citation>
    <scope>VARIANT CPHD1 ARG-179</scope>
    <scope>CHARACTERIZATION OF VARIANT CPHD1 ARG-179</scope>
</reference>
<reference key="19">
    <citation type="journal article" date="2012" name="Clin. Endocrinol. (Oxf.)">
        <title>Two novel mutations in the POU1F1 gene generate null alleles through different mechanisms leading to c ombined pituitary hormone deficiency.</title>
        <authorList>
            <person name="Turton J.P."/>
            <person name="Strom M."/>
            <person name="Langham S."/>
            <person name="Dattani M.T."/>
            <person name="Le Tissier P."/>
        </authorList>
    </citation>
    <scope>VARIANT CPHD1 TRP-265</scope>
    <scope>CHARACTERIZATION OF VARIANT CPHD1 TRP-265</scope>
    <scope>FUNCTION</scope>
</reference>
<reference key="20">
    <citation type="journal article" date="2016" name="Hum. Mol. Genet.">
        <title>Functional characterization of a human POU1F1 mutation associated with isolated growth hormone deficiency: a novel etiology for IGHD.</title>
        <authorList>
            <person name="Sobrier M.L."/>
            <person name="Tsai Y.C."/>
            <person name="Perez C."/>
            <person name="Leheup B."/>
            <person name="Bouceba T."/>
            <person name="Duquesnoy P."/>
            <person name="Copin B."/>
            <person name="Sizova D."/>
            <person name="Penzo A."/>
            <person name="Stanger B.Z."/>
            <person name="Cooke N.E."/>
            <person name="Liebhaber S.A."/>
            <person name="Amselem S."/>
        </authorList>
    </citation>
    <scope>VARIANT CPHD1 LEU-76</scope>
    <scope>CHARACTERIZATION OF VARIANT CPHD1 LEU-76</scope>
    <scope>FUNCTION</scope>
    <scope>INTERACTION WITH ELK1; LHX3 AND PITX1</scope>
    <scope>DNA-BINDING</scope>
    <scope>SUBCELLULAR LOCATION</scope>
    <scope>MUTAGENESIS OF LEU-74; THR-75; PRO-76; CYS-77 AND LEU-78</scope>
</reference>
<evidence type="ECO:0000255" key="1">
    <source>
        <dbReference type="PROSITE-ProRule" id="PRU00108"/>
    </source>
</evidence>
<evidence type="ECO:0000255" key="2">
    <source>
        <dbReference type="PROSITE-ProRule" id="PRU00530"/>
    </source>
</evidence>
<evidence type="ECO:0000269" key="3">
    <source>
    </source>
</evidence>
<evidence type="ECO:0000269" key="4">
    <source>
    </source>
</evidence>
<evidence type="ECO:0000269" key="5">
    <source>
    </source>
</evidence>
<evidence type="ECO:0000269" key="6">
    <source>
    </source>
</evidence>
<evidence type="ECO:0000269" key="7">
    <source>
    </source>
</evidence>
<evidence type="ECO:0000269" key="8">
    <source>
    </source>
</evidence>
<evidence type="ECO:0000269" key="9">
    <source>
    </source>
</evidence>
<evidence type="ECO:0000269" key="10">
    <source>
    </source>
</evidence>
<evidence type="ECO:0000269" key="11">
    <source>
    </source>
</evidence>
<evidence type="ECO:0000269" key="12">
    <source>
    </source>
</evidence>
<evidence type="ECO:0000269" key="13">
    <source>
    </source>
</evidence>
<evidence type="ECO:0000269" key="14">
    <source>
    </source>
</evidence>
<evidence type="ECO:0000269" key="15">
    <source>
    </source>
</evidence>
<evidence type="ECO:0000269" key="16">
    <source>
    </source>
</evidence>
<evidence type="ECO:0000305" key="17"/>
<evidence type="ECO:0007829" key="18">
    <source>
        <dbReference type="PDB" id="5WC9"/>
    </source>
</evidence>
<comment type="function">
    <text evidence="9 10">Transcription factor involved in the specification of the lactotrope, somatotrope, and thyrotrope phenotypes in the developing anterior pituitary. Specifically binds to the consensus sequence 5'-TAAAT-3'. Activates growth hormone and prolactin genes (PubMed:22010633, PubMed:26612202).</text>
</comment>
<comment type="subunit">
    <text evidence="10">Interacts with PITX1 (PubMed:26612202). Interacts with LHX3 (PubMed:26612202). Interacts with ELK1 (PubMed:26612202).</text>
</comment>
<comment type="interaction">
    <interactant intactId="EBI-8673859">
        <id>P28069</id>
    </interactant>
    <interactant intactId="EBI-948603">
        <id>Q03989</id>
        <label>ARID5A</label>
    </interactant>
    <organismsDiffer>false</organismsDiffer>
    <experiments>3</experiments>
</comment>
<comment type="interaction">
    <interactant intactId="EBI-8673859">
        <id>P28069</id>
    </interactant>
    <interactant intactId="EBI-2117357">
        <id>P15289</id>
        <label>ARSA</label>
    </interactant>
    <organismsDiffer>false</organismsDiffer>
    <experiments>3</experiments>
</comment>
<comment type="interaction">
    <interactant intactId="EBI-8673859">
        <id>P28069</id>
    </interactant>
    <interactant intactId="EBI-742054">
        <id>Q96D03</id>
        <label>DDIT4L</label>
    </interactant>
    <organismsDiffer>false</organismsDiffer>
    <experiments>3</experiments>
</comment>
<comment type="interaction">
    <interactant intactId="EBI-8673859">
        <id>P28069</id>
    </interactant>
    <interactant intactId="EBI-10171774">
        <id>P60410</id>
        <label>KRTAP10-8</label>
    </interactant>
    <organismsDiffer>false</organismsDiffer>
    <experiments>3</experiments>
</comment>
<comment type="interaction">
    <interactant intactId="EBI-8673859">
        <id>P28069</id>
    </interactant>
    <interactant intactId="EBI-11992140">
        <id>Q3LI76</id>
        <label>KRTAP15-1</label>
    </interactant>
    <organismsDiffer>false</organismsDiffer>
    <experiments>3</experiments>
</comment>
<comment type="interaction">
    <interactant intactId="EBI-8673859">
        <id>P28069</id>
    </interactant>
    <interactant intactId="EBI-12111050">
        <id>Q3LI64</id>
        <label>KRTAP6-1</label>
    </interactant>
    <organismsDiffer>false</organismsDiffer>
    <experiments>3</experiments>
</comment>
<comment type="interaction">
    <interactant intactId="EBI-8673859">
        <id>P28069</id>
    </interactant>
    <interactant intactId="EBI-9088686">
        <id>Q14847-2</id>
        <label>LASP1</label>
    </interactant>
    <organismsDiffer>false</organismsDiffer>
    <experiments>5</experiments>
</comment>
<comment type="interaction">
    <interactant intactId="EBI-8673859">
        <id>P28069</id>
    </interactant>
    <interactant intactId="EBI-2865388">
        <id>Q969G2</id>
        <label>LHX4</label>
    </interactant>
    <organismsDiffer>false</organismsDiffer>
    <experiments>3</experiments>
</comment>
<comment type="interaction">
    <interactant intactId="EBI-8673859">
        <id>P28069</id>
    </interactant>
    <interactant intactId="EBI-6447480">
        <id>P35548</id>
        <label>MSX2</label>
    </interactant>
    <organismsDiffer>false</organismsDiffer>
    <experiments>3</experiments>
</comment>
<comment type="interaction">
    <interactant intactId="EBI-8673859">
        <id>P28069</id>
    </interactant>
    <interactant intactId="EBI-948156">
        <id>Q9Y4B4</id>
        <label>RAD54L2</label>
    </interactant>
    <organismsDiffer>false</organismsDiffer>
    <experiments>3</experiments>
</comment>
<comment type="interaction">
    <interactant intactId="EBI-8673859">
        <id>P28069</id>
    </interactant>
    <interactant intactId="EBI-10180829">
        <id>Q7KZS0</id>
        <label>UBE2I</label>
    </interactant>
    <organismsDiffer>false</organismsDiffer>
    <experiments>3</experiments>
</comment>
<comment type="subcellular location">
    <subcellularLocation>
        <location evidence="10">Nucleus</location>
    </subcellularLocation>
</comment>
<comment type="alternative products">
    <event type="alternative splicing"/>
    <isoform>
        <id>P28069-1</id>
        <name>B</name>
        <name>Pit-1B</name>
        <name>GHF-1</name>
        <sequence type="displayed"/>
    </isoform>
    <isoform>
        <id>P28069-2</id>
        <name>A</name>
        <name>Pit-1A</name>
        <name>GHF-2</name>
        <sequence type="described" ref="VSP_002314"/>
    </isoform>
</comment>
<comment type="domain">
    <text evidence="11">The 9aaTAD motif is a transactivation domain present in a large number of yeast and animal transcription factors.</text>
</comment>
<comment type="disease" evidence="3 4 5 6 7 8 9 10 12 14 15 16">
    <disease id="DI-01563">
        <name>Pituitary hormone deficiency, combined, 1</name>
        <acronym>CPHD1</acronym>
        <description>Combined pituitary hormone deficiency is defined as the impaired production of growth hormone and one or more of the other five anterior pituitary hormones. CPHD1 is characterized by pleiotropic deficiencies of growth hormone, prolactin and thyroid-stimulating hormone, while the production of adrenocorticotropic hormone, luteinizing hormone, and follicle-stimulating hormone are preserved. In infancy severe growth deficiency from birth as well as distinctive facial features with prominent forehead, marked midfacial hypoplasia with depressed nasal bridge, deep-set eyes, and a short nose with anteverted nostrils and hypoplastic pituitary gland by MRI examination can be seen. Some cases present with severe intellectual disability along with short stature.</description>
        <dbReference type="MIM" id="613038"/>
    </disease>
    <text>The disease is caused by variants affecting the gene represented in this entry.</text>
</comment>
<comment type="miscellaneous">
    <molecule>Isoform A</molecule>
    <text evidence="17">Altered in its ability to trans-activate compared to isoform B.</text>
</comment>
<comment type="similarity">
    <text evidence="17">Belongs to the POU transcription factor family. Class-1 subfamily.</text>
</comment>
<comment type="sequence caution" evidence="17">
    <conflict type="erroneous gene model prediction">
        <sequence resource="EMBL-CDS" id="CAA54440"/>
    </conflict>
</comment>
<sequence length="291" mass="32912">MSCQAFTSADTFIPLNSDASATLPLIMHHSAAECLPVSNHATNVMSTATGLHYSVPSCHYGNQPSTYGVMAGSLTPCLYKFPDHTLSHGFPPIHQPLLAEDPTAADFKQELRRKSKLVEEPIDMDSPEIRELEKFANEFKVRRIKLGYTQTNVGEALAAVHGSEFSQTTICRFENLQLSFKNACKLKAILSKWLEEAEQVGALYNEKVGANERKRKRRTTISIAAKDALERHFGEQNKPSSQEIMRMAEELNLEKEVVRVWFCNRRQREKRVKTSLNQSLFSISKEHLECR</sequence>
<accession>P28069</accession>
<accession>O75757</accession>
<accession>Q15132</accession>
<accession>Q15133</accession>
<accession>Q9UD34</accession>
<accession>Q9UEL3</accession>